<organism evidence="13">
    <name type="scientific">Monascus pilosus</name>
    <name type="common">Red mold</name>
    <dbReference type="NCBI Taxonomy" id="89488"/>
    <lineage>
        <taxon>Eukaryota</taxon>
        <taxon>Fungi</taxon>
        <taxon>Dikarya</taxon>
        <taxon>Ascomycota</taxon>
        <taxon>Pezizomycotina</taxon>
        <taxon>Eurotiomycetes</taxon>
        <taxon>Eurotiomycetidae</taxon>
        <taxon>Eurotiales</taxon>
        <taxon>Aspergillaceae</taxon>
        <taxon>Monascus</taxon>
    </lineage>
</organism>
<protein>
    <recommendedName>
        <fullName evidence="12">Lovastatin diketide synthase mokB</fullName>
        <ecNumber evidence="9">2.3.1.244</ecNumber>
    </recommendedName>
    <alternativeName>
        <fullName evidence="12">Monacolin K biosynthesis protein B</fullName>
    </alternativeName>
</protein>
<proteinExistence type="evidence at protein level"/>
<keyword id="KW-0012">Acyltransferase</keyword>
<keyword id="KW-1015">Disulfide bond</keyword>
<keyword id="KW-0489">Methyltransferase</keyword>
<keyword id="KW-0511">Multifunctional enzyme</keyword>
<keyword id="KW-0521">NADP</keyword>
<keyword id="KW-0560">Oxidoreductase</keyword>
<keyword id="KW-0596">Phosphopantetheine</keyword>
<keyword id="KW-0597">Phosphoprotein</keyword>
<keyword id="KW-0949">S-adenosyl-L-methionine</keyword>
<keyword id="KW-0808">Transferase</keyword>
<sequence>MKATAASGTPTPIAVVGMGCRFAGGATDPQALWKLLEQGGSTWSKTPSSRFNVSGVYHPNGQRVGSMHVRGGHFLDQDPALFDASFFNMTSEVASCMDPQQRLILEVVYEALEAAGIPLESVAGSNTAVFSGAMYHDYQDSLHRNPETLPRYFITGNAGTMMSSRVSHFYDLRGPSVTVDTACSTTLTALHLAIQSIRAGEADMAIVAGSNLLLNSDVFVTMSNLGFLSPDGISYSFDPRANGYGRGEGVAAIILKALPRALRDGDPIRLVVRETALNQDGRTPAITGPSPEAQACLIRECYQKAGLDPRQTSYVEAHGTGTPTGDPLELAAISAAFQGQPLQIGSVKANLGHTEAASGLASVMKVALALEKGIVPPSARFLQPSKKLLEERKFQIPLSSQLWLPIDGICRASINNFGFGGANAHAIVERYDPAARISTSKPNGHIRPHDSHVEADRGKIYVLSAKDEHSCQEMISRLRDYLNRANPTDERQFLANMAYTLASRRSNLRWKAACRAHSLASLLSVLVSDGTRPRRSAEKARLGWVFTGQGAQWFAMGRELIEAYPVFKEALIECDGYIKGMGANWSIIDELRRGEAESRVNEAEFSLPLSTAIQVALVRLLWSWGIRPAAITSHSSGEVAAAYAVGAFSARSAIGISYIRGALIAKTQPAPTTKGGMLAVGLSRSEVGEYITRVQQQGEEYLVVGCINSPSNVTVSGDLSAVVRLEELLHADQIFARRLKVTQAFHSHHMQPLSGEFREALVEVFNADITDTTNACQDVVYASPKTGKRLDDCNHLRDPMHWVESMLFPVEFESSFREMCFDRKDQAQEVDKIIEIGPHGVLSGAIKQILQLPELAAFDISYLSCLSRGKSAVDTIQLLAMDLLQGGYPVDLNAVNFPYGCEAAEVQVLSDLPTYPWNHKTRYWKEPRISRAARQRKIPVHDLIGVQEPLCPPLLHLWQNVLRISDVPWIRDHVVGSRILFPGAGFISMVIDGLSQICNHDPETCGLSYILRDVDLAQALILPTDGDEGVDLRLTIRAADQKSLGMRDWQRFSVYSIAGDKDDWTEHCTGLIRAQVDHPVSSSSIQQKTNPPQWSRKMAPQDLWASLHATGICHGPLFQNIERIESDGQASWCTLTVADTVATMPHAYESQHIVHPTTLDSAIQAAYTVLPFMGTLMKTAMVPSRIGGMKIPASFASLEPGDMLCAQAKIKNQGLSAFTTDVAVFNESDMDEEAGIELEGLTFQSLGAVISDSRRDLTENESTYSSWHWAPDITLTNSTWLERILSTGTQSQEIGVMLELRRCTVHFIQEAIENLTTEDVERLSGHLVKFYCWMQAQLACATNGELGQDSADWLRDSEQERQSLRSRVVAATNNGEMICRLGPKLSAILRGELDPLELMMDGQLLSRYYIRAIKWSRSNTQASELVRLCCHKNPRARILEIGGGTGGCTQLIVNALGPTKPVGRYDFTDVSAGFFEAARKRFSGWQDVMDFRKLDIEGDPEVQGFDCGSYDVVLACQVLHATSNMQRTLNNVRKLLKPGGKLILVETTRDQLDLFFTFGLLPGWWLSEEPERQLTPSLSPELWRSVLSATGFSGVDLEVRDCDSDEFYMISTMMSTATPGTPATTLNGPAEVLLVHAGSPPPMDWLQNLQVALGGKNSSITSLKALQGVSDLKGKMCVFLGEMDRTLLESVVSDDFTSLTSMLQYSQGTLWVTRGAAMASDDPRKALHLGLLRTLRNENHGRRFVSLDLDPLRDPWTAQSCDAIVNVLNAVGASHEKEFEYAERDGTIHVPRTFSDSSSSEKEDLVVLEPFQNETRLVRLDVQTPGLLDSLHFKLCSADEAWSSELPEDWVEIEPRAFGLNFRDIMVAMGQLESNRVMGFECAGVVTRLSKAATTGAGGLAIGDRVCALMKGHWASRVRTARTNVICIPGTLSFEQAASIPLAFTTAYTSLYTVARLQRGEKVLIHGGAGGVGQAAIILAQLVGAEVFTTAGTHSKRNFLIDKFKLAPDHVFSSRDSGFIEGIRACTNGKGVDVVLNSLAGPLLQYSFDCLVNFGRFVEIGKKDLEQNSRLNMATFARNVSFSSIDILYWEEAKSAEIFRALTEIMRLLEQKTIDLIGPISEYPMSAIEKAFRTMQSGQHVGKLVVATAETDMIPVRRGTMPVALKLDASYLIVGGLGGIGRRICEWMVDHGARHLLILSRSGRTDPFVTGLQKRGCVVRIHSCDVADESQLHAVLQQCHEDNMPPIRGIIQAAMVLKDALVSQMTADDFHVALRPKVQGSWNLHKIASEVDFFIMLSSLVGVMGGAGQANYAAAGAFQDALAQHRVAQGKPAVTIDLGMVKSIGYVAETDPAVAERLARIGYQPMHEEEVLAVLERAMSPSSSSAPPSSNPTIPASPAVIVTGINTGPGPHFTNADWMQEARFAGIKYRDPLKDDRGGALSSSQPADEDSVRARLSRASTEEEATALVVQVMGHRLVTMFGLTESEMSATQTLSSVGVDSLVAIELRNWITAQLNVDISVFELMEGRTIAEVAEVVVKKYGVGSKV</sequence>
<evidence type="ECO:0000250" key="1">
    <source>
        <dbReference type="UniProtKB" id="Q0C8M2"/>
    </source>
</evidence>
<evidence type="ECO:0000250" key="2">
    <source>
        <dbReference type="UniProtKB" id="Q9Y7D5"/>
    </source>
</evidence>
<evidence type="ECO:0000250" key="3">
    <source>
        <dbReference type="UniProtKB" id="Q9Y8A5"/>
    </source>
</evidence>
<evidence type="ECO:0000255" key="4">
    <source>
        <dbReference type="PROSITE-ProRule" id="PRU00114"/>
    </source>
</evidence>
<evidence type="ECO:0000255" key="5">
    <source>
        <dbReference type="PROSITE-ProRule" id="PRU00258"/>
    </source>
</evidence>
<evidence type="ECO:0000255" key="6">
    <source>
        <dbReference type="PROSITE-ProRule" id="PRU01348"/>
    </source>
</evidence>
<evidence type="ECO:0000255" key="7">
    <source>
        <dbReference type="PROSITE-ProRule" id="PRU01363"/>
    </source>
</evidence>
<evidence type="ECO:0000255" key="8">
    <source>
        <dbReference type="PROSITE-ProRule" id="PRU10022"/>
    </source>
</evidence>
<evidence type="ECO:0000269" key="9">
    <source>
    </source>
</evidence>
<evidence type="ECO:0000269" key="10">
    <source>
    </source>
</evidence>
<evidence type="ECO:0000269" key="11">
    <source>
    </source>
</evidence>
<evidence type="ECO:0000303" key="12">
    <source>
    </source>
</evidence>
<evidence type="ECO:0000312" key="13">
    <source>
        <dbReference type="EMBL" id="ABA02240.1"/>
    </source>
</evidence>
<reference key="1">
    <citation type="journal article" date="2008" name="J. Agric. Food Chem.">
        <title>Cloning and characterization of monacolin K biosynthetic gene cluster from Monascus pilosus.</title>
        <authorList>
            <person name="Chen Y.P."/>
            <person name="Tseng C.P."/>
            <person name="Liaw L.L."/>
            <person name="Wang C.L."/>
            <person name="Chen I.C."/>
            <person name="Wu W.J."/>
            <person name="Wu M.D."/>
            <person name="Yuan G.F."/>
        </authorList>
    </citation>
    <scope>NUCLEOTIDE SEQUENCE [GENOMIC DNA]</scope>
    <scope>FUNCTION</scope>
</reference>
<reference key="2">
    <citation type="journal article" date="2009" name="Biotechnol. Lett.">
        <title>Identification of mokB involved in monacolin K biosynthesis in Monascus pilosus.</title>
        <authorList>
            <person name="Sakai K."/>
            <person name="Kinoshita H."/>
            <person name="Nihira T."/>
        </authorList>
    </citation>
    <scope>FUNCTION</scope>
    <scope>CATALYTIC ACTIVITY</scope>
    <scope>DISRUPTION PHENOTYPE</scope>
</reference>
<reference key="3">
    <citation type="journal article" date="2010" name="J. Agric. Food Chem.">
        <title>Identification of the mokH gene encoding transcription factor for the upregulation of monacolin K biosynthesis in Monascus pilosus.</title>
        <authorList>
            <person name="Chen Y.-P."/>
            <person name="Yuan G.-F."/>
            <person name="Hsieh S.-Y."/>
            <person name="Lin Y.-S."/>
            <person name="Wang W.-Y."/>
            <person name="Liaw L.-L."/>
            <person name="Tseng C.-P."/>
        </authorList>
    </citation>
    <scope>INDUCTION</scope>
</reference>
<reference key="4">
    <citation type="journal article" date="2011" name="Biosci. Biotechnol. Biochem.">
        <title>Simultaneous enrichment of deglycosylated ginsenosides and monacolin K in red ginseng by fermentation with Monascus pilosus.</title>
        <authorList>
            <person name="Hong S.Y."/>
            <person name="Oh J.H."/>
            <person name="Lee I."/>
        </authorList>
    </citation>
    <scope>BIOTECHNOLOGY</scope>
</reference>
<accession>Q3S2U6</accession>
<comment type="function">
    <text evidence="1 2 9 12">Diketide synthase; part of the gene cluster that mediates the biosynthesis of monakolin K, also known as lovastatin, and which acts as a potent competitive inhibitor of HMG-CoA reductase (PubMed:18578535). Monakolin K biosynthesis is performed in two stages (PubMed:19693441). The first stage is catalyzed by the nonaketide synthase mokA, which belongs to type I polyketide synthases and catalyzes the iterative nine-step formation of the polyketide (PubMed:18578535, PubMed:19693441). This PKS stage completed by the action of dehydrogenase mokE, which catalyzes the NADPH-dependent reduction of the unsaturated tetra-, penta- and heptaketide intermediates that arise during the mokA-mediated biosynthesis of the nonaketide chain and leads to dihydromonacolin L (PubMed:19693441). Covalently bound dihydromonacolin L is released from mokA by the mokD esterase (By similarity). Conversion of dihydromonacolin L into monacolin L and then monacolin J is subsequently performed with the participation of molecular oxygen and P450 monoogygenase mokC (PubMed:19693441). Finally, mokF performs the conversion of monacoline J to monacoline K through the addition of the side-chain diketide moiety (2R)-2-methylbutanoate produced by the diketide synthase mokB (PubMed:19693441).</text>
</comment>
<comment type="catalytic activity">
    <reaction evidence="9">
        <text>holo-[2-methylbutanoate polyketide synthase] + 2 malonyl-CoA + S-adenosyl-L-methionine + 2 NADPH + 3 H(+) = (S)-2-methylbutanoyl-[2-methylbutanoate polyketide synthase] + S-adenosyl-L-homocysteine + 2 CO2 + 2 NADP(+) + 2 CoA + H2O</text>
        <dbReference type="Rhea" id="RHEA:42852"/>
        <dbReference type="Rhea" id="RHEA-COMP:10260"/>
        <dbReference type="Rhea" id="RHEA-COMP:10261"/>
        <dbReference type="ChEBI" id="CHEBI:15377"/>
        <dbReference type="ChEBI" id="CHEBI:15378"/>
        <dbReference type="ChEBI" id="CHEBI:16526"/>
        <dbReference type="ChEBI" id="CHEBI:57287"/>
        <dbReference type="ChEBI" id="CHEBI:57384"/>
        <dbReference type="ChEBI" id="CHEBI:57783"/>
        <dbReference type="ChEBI" id="CHEBI:57856"/>
        <dbReference type="ChEBI" id="CHEBI:58349"/>
        <dbReference type="ChEBI" id="CHEBI:59789"/>
        <dbReference type="ChEBI" id="CHEBI:64479"/>
        <dbReference type="ChEBI" id="CHEBI:82764"/>
        <dbReference type="EC" id="2.3.1.244"/>
    </reaction>
</comment>
<comment type="cofactor">
    <cofactor evidence="2">
        <name>pantetheine 4'-phosphate</name>
        <dbReference type="ChEBI" id="CHEBI:47942"/>
    </cofactor>
    <text evidence="2">Binds 1 phosphopantetheine covalently.</text>
</comment>
<comment type="pathway">
    <text evidence="9">Polyketide biosynthesis; lovastatin biosynthesis.</text>
</comment>
<comment type="induction">
    <text evidence="10">Expression is controlled by the monacolin K cluster transcription regulator mokH (PubMed:19968298).</text>
</comment>
<comment type="disruption phenotype">
    <text evidence="9">Imairs the production of monacolin K and leads to the accumulation of the monacolin J intermediate (PubMed:19693441).</text>
</comment>
<comment type="biotechnology">
    <text evidence="11">Monacoline K acts as an inhibitor of HMG-CoA reductase involved in cholesterogenesis (PubMed:21821946). Its hypocholesterolemic activity might be useful for lowering cholesterol levels in the blood and reduce artherosclerosis and coronary heart disease (PubMed:21821946).</text>
</comment>
<name>MOKB_MONPI</name>
<feature type="chain" id="PRO_0000436281" description="Lovastatin diketide synthase mokB">
    <location>
        <begin position="1"/>
        <end position="2547"/>
    </location>
</feature>
<feature type="domain" description="Ketosynthase family 3 (KS3)" evidence="6">
    <location>
        <begin position="10"/>
        <end position="430"/>
    </location>
</feature>
<feature type="domain" description="PKS/mFAS DH" evidence="7">
    <location>
        <begin position="941"/>
        <end position="1252"/>
    </location>
</feature>
<feature type="domain" description="Carrier" evidence="5">
    <location>
        <begin position="2459"/>
        <end position="2541"/>
    </location>
</feature>
<feature type="region of interest" description="Acyl and malonyl transferase" evidence="3">
    <location>
        <begin position="545"/>
        <end position="890"/>
    </location>
</feature>
<feature type="region of interest" description="N-terminal hotdog fold" evidence="7">
    <location>
        <begin position="941"/>
        <end position="1079"/>
    </location>
</feature>
<feature type="region of interest" description="Dehydratase-like" evidence="3">
    <location>
        <begin position="973"/>
        <end position="985"/>
    </location>
</feature>
<feature type="region of interest" description="C-terminal hotdog fold" evidence="7">
    <location>
        <begin position="1095"/>
        <end position="1252"/>
    </location>
</feature>
<feature type="region of interest" description="Methyltransferase" evidence="3">
    <location>
        <begin position="1510"/>
        <end position="1547"/>
    </location>
</feature>
<feature type="active site" description="For beta-ketoacyl synthase activity" evidence="6">
    <location>
        <position position="183"/>
    </location>
</feature>
<feature type="active site" description="For beta-ketoacyl synthase activity" evidence="6">
    <location>
        <position position="318"/>
    </location>
</feature>
<feature type="active site" description="For beta-ketoacyl synthase activity" evidence="6">
    <location>
        <position position="353"/>
    </location>
</feature>
<feature type="active site" description="For malonyltransferase activity" evidence="8">
    <location>
        <position position="635"/>
    </location>
</feature>
<feature type="active site" description="Proton acceptor; for dehydratase activity" evidence="7">
    <location>
        <position position="973"/>
    </location>
</feature>
<feature type="active site" description="Proton donor; for dehydratase activity" evidence="7">
    <location>
        <position position="1160"/>
    </location>
</feature>
<feature type="modified residue" description="O-(pantetheine 4'-phosphoryl)serine" evidence="5">
    <location>
        <position position="2501"/>
    </location>
</feature>
<feature type="disulfide bond" evidence="4">
    <location>
        <begin position="1340"/>
        <end position="1379"/>
    </location>
</feature>
<gene>
    <name evidence="12" type="primary">mokB</name>
</gene>
<dbReference type="EC" id="2.3.1.244" evidence="9"/>
<dbReference type="EMBL" id="DQ176595">
    <property type="protein sequence ID" value="ABA02240.1"/>
    <property type="molecule type" value="Genomic_DNA"/>
</dbReference>
<dbReference type="SMR" id="Q3S2U6"/>
<dbReference type="UniPathway" id="UPA00875"/>
<dbReference type="GO" id="GO:0004315">
    <property type="term" value="F:3-oxoacyl-[acyl-carrier-protein] synthase activity"/>
    <property type="evidence" value="ECO:0007669"/>
    <property type="project" value="InterPro"/>
</dbReference>
<dbReference type="GO" id="GO:0004312">
    <property type="term" value="F:fatty acid synthase activity"/>
    <property type="evidence" value="ECO:0007669"/>
    <property type="project" value="TreeGrafter"/>
</dbReference>
<dbReference type="GO" id="GO:0008168">
    <property type="term" value="F:methyltransferase activity"/>
    <property type="evidence" value="ECO:0007669"/>
    <property type="project" value="UniProtKB-KW"/>
</dbReference>
<dbReference type="GO" id="GO:0016491">
    <property type="term" value="F:oxidoreductase activity"/>
    <property type="evidence" value="ECO:0007669"/>
    <property type="project" value="UniProtKB-KW"/>
</dbReference>
<dbReference type="GO" id="GO:0031177">
    <property type="term" value="F:phosphopantetheine binding"/>
    <property type="evidence" value="ECO:0007669"/>
    <property type="project" value="InterPro"/>
</dbReference>
<dbReference type="GO" id="GO:0006633">
    <property type="term" value="P:fatty acid biosynthetic process"/>
    <property type="evidence" value="ECO:0007669"/>
    <property type="project" value="InterPro"/>
</dbReference>
<dbReference type="GO" id="GO:0032259">
    <property type="term" value="P:methylation"/>
    <property type="evidence" value="ECO:0007669"/>
    <property type="project" value="UniProtKB-KW"/>
</dbReference>
<dbReference type="GO" id="GO:0030639">
    <property type="term" value="P:polyketide biosynthetic process"/>
    <property type="evidence" value="ECO:0007669"/>
    <property type="project" value="UniProtKB-ARBA"/>
</dbReference>
<dbReference type="CDD" id="cd02440">
    <property type="entry name" value="AdoMet_MTases"/>
    <property type="match status" value="1"/>
</dbReference>
<dbReference type="CDD" id="cd05195">
    <property type="entry name" value="enoyl_red"/>
    <property type="match status" value="1"/>
</dbReference>
<dbReference type="CDD" id="cd00833">
    <property type="entry name" value="PKS"/>
    <property type="match status" value="1"/>
</dbReference>
<dbReference type="FunFam" id="3.40.50.720:FF:000209">
    <property type="entry name" value="Polyketide synthase Pks12"/>
    <property type="match status" value="1"/>
</dbReference>
<dbReference type="Gene3D" id="3.30.70.3290">
    <property type="match status" value="1"/>
</dbReference>
<dbReference type="Gene3D" id="3.40.47.10">
    <property type="match status" value="1"/>
</dbReference>
<dbReference type="Gene3D" id="1.10.1200.10">
    <property type="entry name" value="ACP-like"/>
    <property type="match status" value="1"/>
</dbReference>
<dbReference type="Gene3D" id="3.40.366.10">
    <property type="entry name" value="Malonyl-Coenzyme A Acyl Carrier Protein, domain 2"/>
    <property type="match status" value="1"/>
</dbReference>
<dbReference type="Gene3D" id="3.90.180.10">
    <property type="entry name" value="Medium-chain alcohol dehydrogenases, catalytic domain"/>
    <property type="match status" value="1"/>
</dbReference>
<dbReference type="Gene3D" id="3.40.50.720">
    <property type="entry name" value="NAD(P)-binding Rossmann-like Domain"/>
    <property type="match status" value="2"/>
</dbReference>
<dbReference type="Gene3D" id="3.10.129.110">
    <property type="entry name" value="Polyketide synthase dehydratase"/>
    <property type="match status" value="1"/>
</dbReference>
<dbReference type="Gene3D" id="3.40.50.150">
    <property type="entry name" value="Vaccinia Virus protein VP39"/>
    <property type="match status" value="1"/>
</dbReference>
<dbReference type="InterPro" id="IPR001227">
    <property type="entry name" value="Ac_transferase_dom_sf"/>
</dbReference>
<dbReference type="InterPro" id="IPR036736">
    <property type="entry name" value="ACP-like_sf"/>
</dbReference>
<dbReference type="InterPro" id="IPR014043">
    <property type="entry name" value="Acyl_transferase_dom"/>
</dbReference>
<dbReference type="InterPro" id="IPR016035">
    <property type="entry name" value="Acyl_Trfase/lysoPLipase"/>
</dbReference>
<dbReference type="InterPro" id="IPR013154">
    <property type="entry name" value="ADH-like_N"/>
</dbReference>
<dbReference type="InterPro" id="IPR011032">
    <property type="entry name" value="GroES-like_sf"/>
</dbReference>
<dbReference type="InterPro" id="IPR018201">
    <property type="entry name" value="Ketoacyl_synth_AS"/>
</dbReference>
<dbReference type="InterPro" id="IPR014031">
    <property type="entry name" value="Ketoacyl_synth_C"/>
</dbReference>
<dbReference type="InterPro" id="IPR014030">
    <property type="entry name" value="Ketoacyl_synth_N"/>
</dbReference>
<dbReference type="InterPro" id="IPR016036">
    <property type="entry name" value="Malonyl_transacylase_ACP-bd"/>
</dbReference>
<dbReference type="InterPro" id="IPR013217">
    <property type="entry name" value="Methyltransf_12"/>
</dbReference>
<dbReference type="InterPro" id="IPR036291">
    <property type="entry name" value="NAD(P)-bd_dom_sf"/>
</dbReference>
<dbReference type="InterPro" id="IPR056501">
    <property type="entry name" value="NAD-bd_HRPKS_sdrA"/>
</dbReference>
<dbReference type="InterPro" id="IPR032821">
    <property type="entry name" value="PKS_assoc"/>
</dbReference>
<dbReference type="InterPro" id="IPR020841">
    <property type="entry name" value="PKS_Beta-ketoAc_synthase_dom"/>
</dbReference>
<dbReference type="InterPro" id="IPR042104">
    <property type="entry name" value="PKS_dehydratase_sf"/>
</dbReference>
<dbReference type="InterPro" id="IPR020807">
    <property type="entry name" value="PKS_DH"/>
</dbReference>
<dbReference type="InterPro" id="IPR049551">
    <property type="entry name" value="PKS_DH_C"/>
</dbReference>
<dbReference type="InterPro" id="IPR049552">
    <property type="entry name" value="PKS_DH_N"/>
</dbReference>
<dbReference type="InterPro" id="IPR020843">
    <property type="entry name" value="PKS_ER"/>
</dbReference>
<dbReference type="InterPro" id="IPR013968">
    <property type="entry name" value="PKS_KR"/>
</dbReference>
<dbReference type="InterPro" id="IPR049900">
    <property type="entry name" value="PKS_mFAS_DH"/>
</dbReference>
<dbReference type="InterPro" id="IPR050091">
    <property type="entry name" value="PKS_NRPS_Biosynth_Enz"/>
</dbReference>
<dbReference type="InterPro" id="IPR020806">
    <property type="entry name" value="PKS_PP-bd"/>
</dbReference>
<dbReference type="InterPro" id="IPR009081">
    <property type="entry name" value="PP-bd_ACP"/>
</dbReference>
<dbReference type="InterPro" id="IPR006162">
    <property type="entry name" value="Ppantetheine_attach_site"/>
</dbReference>
<dbReference type="InterPro" id="IPR029063">
    <property type="entry name" value="SAM-dependent_MTases_sf"/>
</dbReference>
<dbReference type="InterPro" id="IPR016039">
    <property type="entry name" value="Thiolase-like"/>
</dbReference>
<dbReference type="PANTHER" id="PTHR43775:SF29">
    <property type="entry name" value="ASPERFURANONE POLYKETIDE SYNTHASE AFOG-RELATED"/>
    <property type="match status" value="1"/>
</dbReference>
<dbReference type="PANTHER" id="PTHR43775">
    <property type="entry name" value="FATTY ACID SYNTHASE"/>
    <property type="match status" value="1"/>
</dbReference>
<dbReference type="Pfam" id="PF00698">
    <property type="entry name" value="Acyl_transf_1"/>
    <property type="match status" value="1"/>
</dbReference>
<dbReference type="Pfam" id="PF08240">
    <property type="entry name" value="ADH_N"/>
    <property type="match status" value="1"/>
</dbReference>
<dbReference type="Pfam" id="PF13602">
    <property type="entry name" value="ADH_zinc_N_2"/>
    <property type="match status" value="1"/>
</dbReference>
<dbReference type="Pfam" id="PF16197">
    <property type="entry name" value="KAsynt_C_assoc"/>
    <property type="match status" value="1"/>
</dbReference>
<dbReference type="Pfam" id="PF00109">
    <property type="entry name" value="ketoacyl-synt"/>
    <property type="match status" value="1"/>
</dbReference>
<dbReference type="Pfam" id="PF02801">
    <property type="entry name" value="Ketoacyl-synt_C"/>
    <property type="match status" value="1"/>
</dbReference>
<dbReference type="Pfam" id="PF08659">
    <property type="entry name" value="KR"/>
    <property type="match status" value="1"/>
</dbReference>
<dbReference type="Pfam" id="PF08242">
    <property type="entry name" value="Methyltransf_12"/>
    <property type="match status" value="1"/>
</dbReference>
<dbReference type="Pfam" id="PF23114">
    <property type="entry name" value="NAD-bd_HRPKS_sdrA"/>
    <property type="match status" value="1"/>
</dbReference>
<dbReference type="Pfam" id="PF21089">
    <property type="entry name" value="PKS_DH_N"/>
    <property type="match status" value="1"/>
</dbReference>
<dbReference type="Pfam" id="PF00550">
    <property type="entry name" value="PP-binding"/>
    <property type="match status" value="1"/>
</dbReference>
<dbReference type="Pfam" id="PF14765">
    <property type="entry name" value="PS-DH"/>
    <property type="match status" value="1"/>
</dbReference>
<dbReference type="SMART" id="SM00827">
    <property type="entry name" value="PKS_AT"/>
    <property type="match status" value="1"/>
</dbReference>
<dbReference type="SMART" id="SM00826">
    <property type="entry name" value="PKS_DH"/>
    <property type="match status" value="1"/>
</dbReference>
<dbReference type="SMART" id="SM00829">
    <property type="entry name" value="PKS_ER"/>
    <property type="match status" value="1"/>
</dbReference>
<dbReference type="SMART" id="SM00822">
    <property type="entry name" value="PKS_KR"/>
    <property type="match status" value="1"/>
</dbReference>
<dbReference type="SMART" id="SM00825">
    <property type="entry name" value="PKS_KS"/>
    <property type="match status" value="1"/>
</dbReference>
<dbReference type="SMART" id="SM00823">
    <property type="entry name" value="PKS_PP"/>
    <property type="match status" value="1"/>
</dbReference>
<dbReference type="SUPFAM" id="SSF47336">
    <property type="entry name" value="ACP-like"/>
    <property type="match status" value="1"/>
</dbReference>
<dbReference type="SUPFAM" id="SSF52151">
    <property type="entry name" value="FabD/lysophospholipase-like"/>
    <property type="match status" value="1"/>
</dbReference>
<dbReference type="SUPFAM" id="SSF50129">
    <property type="entry name" value="GroES-like"/>
    <property type="match status" value="1"/>
</dbReference>
<dbReference type="SUPFAM" id="SSF51735">
    <property type="entry name" value="NAD(P)-binding Rossmann-fold domains"/>
    <property type="match status" value="3"/>
</dbReference>
<dbReference type="SUPFAM" id="SSF55048">
    <property type="entry name" value="Probable ACP-binding domain of malonyl-CoA ACP transacylase"/>
    <property type="match status" value="1"/>
</dbReference>
<dbReference type="SUPFAM" id="SSF53335">
    <property type="entry name" value="S-adenosyl-L-methionine-dependent methyltransferases"/>
    <property type="match status" value="1"/>
</dbReference>
<dbReference type="SUPFAM" id="SSF53901">
    <property type="entry name" value="Thiolase-like"/>
    <property type="match status" value="1"/>
</dbReference>
<dbReference type="PROSITE" id="PS50075">
    <property type="entry name" value="CARRIER"/>
    <property type="match status" value="1"/>
</dbReference>
<dbReference type="PROSITE" id="PS00606">
    <property type="entry name" value="KS3_1"/>
    <property type="match status" value="1"/>
</dbReference>
<dbReference type="PROSITE" id="PS52004">
    <property type="entry name" value="KS3_2"/>
    <property type="match status" value="1"/>
</dbReference>
<dbReference type="PROSITE" id="PS00012">
    <property type="entry name" value="PHOSPHOPANTETHEINE"/>
    <property type="match status" value="1"/>
</dbReference>
<dbReference type="PROSITE" id="PS52019">
    <property type="entry name" value="PKS_MFAS_DH"/>
    <property type="match status" value="1"/>
</dbReference>